<dbReference type="EMBL" id="AAFI02000006">
    <property type="protein sequence ID" value="EAL71751.1"/>
    <property type="molecule type" value="Genomic_DNA"/>
</dbReference>
<dbReference type="RefSeq" id="XP_645710.1">
    <property type="nucleotide sequence ID" value="XM_640618.1"/>
</dbReference>
<dbReference type="SMR" id="Q55BA2"/>
<dbReference type="FunCoup" id="Q55BA2">
    <property type="interactions" value="2"/>
</dbReference>
<dbReference type="STRING" id="44689.Q55BA2"/>
<dbReference type="GlyGen" id="Q55BA2">
    <property type="glycosylation" value="3 sites"/>
</dbReference>
<dbReference type="PaxDb" id="44689-DDB0202799"/>
<dbReference type="ABCD" id="Q55BA2">
    <property type="antibodies" value="2 sequenced antibodies"/>
</dbReference>
<dbReference type="EnsemblProtists" id="EAL71751">
    <property type="protein sequence ID" value="EAL71751"/>
    <property type="gene ID" value="DDB_G0271242"/>
</dbReference>
<dbReference type="GeneID" id="8617903"/>
<dbReference type="KEGG" id="ddi:DDB_G0271242"/>
<dbReference type="dictyBase" id="DDB_G0271242">
    <property type="gene designation" value="bpiC"/>
</dbReference>
<dbReference type="VEuPathDB" id="AmoebaDB:DDB_G0271242"/>
<dbReference type="eggNOG" id="ENOG502RBPA">
    <property type="taxonomic scope" value="Eukaryota"/>
</dbReference>
<dbReference type="HOGENOM" id="CLU_542317_0_0_1"/>
<dbReference type="InParanoid" id="Q55BA2"/>
<dbReference type="OMA" id="VCDKTHD"/>
<dbReference type="PhylomeDB" id="Q55BA2"/>
<dbReference type="Reactome" id="R-DDI-166016">
    <property type="pathway name" value="Toll Like Receptor 4 (TLR4) Cascade"/>
</dbReference>
<dbReference type="Reactome" id="R-DDI-5686938">
    <property type="pathway name" value="Regulation of TLR by endogenous ligand"/>
</dbReference>
<dbReference type="Reactome" id="R-DDI-6798695">
    <property type="pathway name" value="Neutrophil degranulation"/>
</dbReference>
<dbReference type="Reactome" id="R-DDI-6803157">
    <property type="pathway name" value="Antimicrobial peptides"/>
</dbReference>
<dbReference type="PRO" id="PR:Q55BA2"/>
<dbReference type="Proteomes" id="UP000002195">
    <property type="component" value="Chromosome 2"/>
</dbReference>
<dbReference type="GO" id="GO:0005576">
    <property type="term" value="C:extracellular region"/>
    <property type="evidence" value="ECO:0007669"/>
    <property type="project" value="UniProtKB-SubCell"/>
</dbReference>
<dbReference type="GO" id="GO:0008289">
    <property type="term" value="F:lipid binding"/>
    <property type="evidence" value="ECO:0007669"/>
    <property type="project" value="InterPro"/>
</dbReference>
<dbReference type="GO" id="GO:0050829">
    <property type="term" value="P:defense response to Gram-negative bacterium"/>
    <property type="evidence" value="ECO:0000315"/>
    <property type="project" value="dictyBase"/>
</dbReference>
<dbReference type="Gene3D" id="3.15.10.10">
    <property type="entry name" value="Bactericidal permeability-increasing protein, domain 1"/>
    <property type="match status" value="1"/>
</dbReference>
<dbReference type="Gene3D" id="3.15.20.10">
    <property type="entry name" value="Bactericidal permeability-increasing protein, domain 2"/>
    <property type="match status" value="1"/>
</dbReference>
<dbReference type="InterPro" id="IPR017943">
    <property type="entry name" value="Bactericidal_perm-incr_a/b_dom"/>
</dbReference>
<dbReference type="InterPro" id="IPR032942">
    <property type="entry name" value="BPI/LBP/Plunc"/>
</dbReference>
<dbReference type="InterPro" id="IPR001124">
    <property type="entry name" value="Lipid-bd_serum_glycop_C"/>
</dbReference>
<dbReference type="PANTHER" id="PTHR10504">
    <property type="entry name" value="BACTERICIDAL PERMEABILITY-INCREASING BPI PROTEIN-RELATED"/>
    <property type="match status" value="1"/>
</dbReference>
<dbReference type="PANTHER" id="PTHR10504:SF131">
    <property type="entry name" value="BPI2 DOMAIN-CONTAINING PROTEIN"/>
    <property type="match status" value="1"/>
</dbReference>
<dbReference type="Pfam" id="PF02886">
    <property type="entry name" value="LBP_BPI_CETP_C"/>
    <property type="match status" value="1"/>
</dbReference>
<dbReference type="SMART" id="SM00329">
    <property type="entry name" value="BPI2"/>
    <property type="match status" value="1"/>
</dbReference>
<dbReference type="SUPFAM" id="SSF55394">
    <property type="entry name" value="Bactericidal permeability-increasing protein, BPI"/>
    <property type="match status" value="2"/>
</dbReference>
<sequence length="503" mass="54423">MKLFILIILSICLALVNSQQGVYPDSGVYVSLNSNFLATFGNEFTQTIQNQINSYPVANVDGKTGKVSYSVTNIQQSVQLGDFFFQQTGVNTYNIGWNSVTFTITTDYQGCYKIGGLKKLSICEKGDIKINSQATLSLSIAMTIDFTQSTPTISCSSTTLNVPANGINYNVHCSSKVCDKTHDITNEIASKFVPSVESGMTTEINNNVGKYLSLFPSLRDMNMEYNGNEFYLDSRGTIVESSQGGVLTPTMVLAMNGGIVVKNSAGQFIYPTQSPSSLPSEEAVEDFQTDIAVTLTPYLFESLVDAMFESALPMTITPSEVPSESPVHLNTSDPFFNQTAPGLTGKYPNSPIDVEIISPSSSSQTMVSINSTGVLVGLHSIPVNFIVNDETVFQILFNFNIELTPALSQSSNGISVTGTLDKLDALVTVGSTSVGDIDVSGFVQLIELAQGLVKIPTITIQNPLTTYSLSDLSLSIGDQYIQILGNLQQQQQQQQKQKQILIK</sequence>
<comment type="subcellular location">
    <subcellularLocation>
        <location evidence="2">Secreted</location>
    </subcellularLocation>
</comment>
<comment type="similarity">
    <text evidence="2">Belongs to the UPF0522 family.</text>
</comment>
<name>U522C_DICDI</name>
<reference key="1">
    <citation type="journal article" date="2002" name="Nature">
        <title>Sequence and analysis of chromosome 2 of Dictyostelium discoideum.</title>
        <authorList>
            <person name="Gloeckner G."/>
            <person name="Eichinger L."/>
            <person name="Szafranski K."/>
            <person name="Pachebat J.A."/>
            <person name="Bankier A.T."/>
            <person name="Dear P.H."/>
            <person name="Lehmann R."/>
            <person name="Baumgart C."/>
            <person name="Parra G."/>
            <person name="Abril J.F."/>
            <person name="Guigo R."/>
            <person name="Kumpf K."/>
            <person name="Tunggal B."/>
            <person name="Cox E.C."/>
            <person name="Quail M.A."/>
            <person name="Platzer M."/>
            <person name="Rosenthal A."/>
            <person name="Noegel A.A."/>
        </authorList>
    </citation>
    <scope>NUCLEOTIDE SEQUENCE [LARGE SCALE GENOMIC DNA]</scope>
    <source>
        <strain>AX4</strain>
    </source>
</reference>
<reference key="2">
    <citation type="journal article" date="2005" name="Nature">
        <title>The genome of the social amoeba Dictyostelium discoideum.</title>
        <authorList>
            <person name="Eichinger L."/>
            <person name="Pachebat J.A."/>
            <person name="Gloeckner G."/>
            <person name="Rajandream M.A."/>
            <person name="Sucgang R."/>
            <person name="Berriman M."/>
            <person name="Song J."/>
            <person name="Olsen R."/>
            <person name="Szafranski K."/>
            <person name="Xu Q."/>
            <person name="Tunggal B."/>
            <person name="Kummerfeld S."/>
            <person name="Madera M."/>
            <person name="Konfortov B.A."/>
            <person name="Rivero F."/>
            <person name="Bankier A.T."/>
            <person name="Lehmann R."/>
            <person name="Hamlin N."/>
            <person name="Davies R."/>
            <person name="Gaudet P."/>
            <person name="Fey P."/>
            <person name="Pilcher K."/>
            <person name="Chen G."/>
            <person name="Saunders D."/>
            <person name="Sodergren E.J."/>
            <person name="Davis P."/>
            <person name="Kerhornou A."/>
            <person name="Nie X."/>
            <person name="Hall N."/>
            <person name="Anjard C."/>
            <person name="Hemphill L."/>
            <person name="Bason N."/>
            <person name="Farbrother P."/>
            <person name="Desany B."/>
            <person name="Just E."/>
            <person name="Morio T."/>
            <person name="Rost R."/>
            <person name="Churcher C.M."/>
            <person name="Cooper J."/>
            <person name="Haydock S."/>
            <person name="van Driessche N."/>
            <person name="Cronin A."/>
            <person name="Goodhead I."/>
            <person name="Muzny D.M."/>
            <person name="Mourier T."/>
            <person name="Pain A."/>
            <person name="Lu M."/>
            <person name="Harper D."/>
            <person name="Lindsay R."/>
            <person name="Hauser H."/>
            <person name="James K.D."/>
            <person name="Quiles M."/>
            <person name="Madan Babu M."/>
            <person name="Saito T."/>
            <person name="Buchrieser C."/>
            <person name="Wardroper A."/>
            <person name="Felder M."/>
            <person name="Thangavelu M."/>
            <person name="Johnson D."/>
            <person name="Knights A."/>
            <person name="Loulseged H."/>
            <person name="Mungall K.L."/>
            <person name="Oliver K."/>
            <person name="Price C."/>
            <person name="Quail M.A."/>
            <person name="Urushihara H."/>
            <person name="Hernandez J."/>
            <person name="Rabbinowitsch E."/>
            <person name="Steffen D."/>
            <person name="Sanders M."/>
            <person name="Ma J."/>
            <person name="Kohara Y."/>
            <person name="Sharp S."/>
            <person name="Simmonds M.N."/>
            <person name="Spiegler S."/>
            <person name="Tivey A."/>
            <person name="Sugano S."/>
            <person name="White B."/>
            <person name="Walker D."/>
            <person name="Woodward J.R."/>
            <person name="Winckler T."/>
            <person name="Tanaka Y."/>
            <person name="Shaulsky G."/>
            <person name="Schleicher M."/>
            <person name="Weinstock G.M."/>
            <person name="Rosenthal A."/>
            <person name="Cox E.C."/>
            <person name="Chisholm R.L."/>
            <person name="Gibbs R.A."/>
            <person name="Loomis W.F."/>
            <person name="Platzer M."/>
            <person name="Kay R.R."/>
            <person name="Williams J.G."/>
            <person name="Dear P.H."/>
            <person name="Noegel A.A."/>
            <person name="Barrell B.G."/>
            <person name="Kuspa A."/>
        </authorList>
    </citation>
    <scope>NUCLEOTIDE SEQUENCE [LARGE SCALE GENOMIC DNA]</scope>
    <source>
        <strain>AX4</strain>
    </source>
</reference>
<organism>
    <name type="scientific">Dictyostelium discoideum</name>
    <name type="common">Social amoeba</name>
    <dbReference type="NCBI Taxonomy" id="44689"/>
    <lineage>
        <taxon>Eukaryota</taxon>
        <taxon>Amoebozoa</taxon>
        <taxon>Evosea</taxon>
        <taxon>Eumycetozoa</taxon>
        <taxon>Dictyostelia</taxon>
        <taxon>Dictyosteliales</taxon>
        <taxon>Dictyosteliaceae</taxon>
        <taxon>Dictyostelium</taxon>
    </lineage>
</organism>
<gene>
    <name type="ORF">DDB_G0271242</name>
</gene>
<proteinExistence type="inferred from homology"/>
<evidence type="ECO:0000255" key="1"/>
<evidence type="ECO:0000305" key="2"/>
<feature type="signal peptide" evidence="1">
    <location>
        <begin position="1"/>
        <end position="18"/>
    </location>
</feature>
<feature type="chain" id="PRO_0000319965" description="UPF0522 protein C">
    <location>
        <begin position="19"/>
        <end position="503"/>
    </location>
</feature>
<feature type="glycosylation site" description="N-linked (GlcNAc...) asparagine" evidence="1">
    <location>
        <position position="330"/>
    </location>
</feature>
<feature type="glycosylation site" description="N-linked (GlcNAc...) asparagine" evidence="1">
    <location>
        <position position="337"/>
    </location>
</feature>
<feature type="glycosylation site" description="N-linked (GlcNAc...) asparagine" evidence="1">
    <location>
        <position position="370"/>
    </location>
</feature>
<protein>
    <recommendedName>
        <fullName>UPF0522 protein C</fullName>
    </recommendedName>
</protein>
<accession>Q55BA2</accession>
<keyword id="KW-0325">Glycoprotein</keyword>
<keyword id="KW-1185">Reference proteome</keyword>
<keyword id="KW-0964">Secreted</keyword>
<keyword id="KW-0732">Signal</keyword>